<feature type="chain" id="PRO_0000376684" description="2,3,4,5-tetrahydropyridine-2,6-dicarboxylate N-acetyltransferase">
    <location>
        <begin position="1"/>
        <end position="236"/>
    </location>
</feature>
<reference key="1">
    <citation type="journal article" date="2006" name="Proc. Natl. Acad. Sci. U.S.A.">
        <title>Comparative genomics of the lactic acid bacteria.</title>
        <authorList>
            <person name="Makarova K.S."/>
            <person name="Slesarev A."/>
            <person name="Wolf Y.I."/>
            <person name="Sorokin A."/>
            <person name="Mirkin B."/>
            <person name="Koonin E.V."/>
            <person name="Pavlov A."/>
            <person name="Pavlova N."/>
            <person name="Karamychev V."/>
            <person name="Polouchine N."/>
            <person name="Shakhova V."/>
            <person name="Grigoriev I."/>
            <person name="Lou Y."/>
            <person name="Rohksar D."/>
            <person name="Lucas S."/>
            <person name="Huang K."/>
            <person name="Goodstein D.M."/>
            <person name="Hawkins T."/>
            <person name="Plengvidhya V."/>
            <person name="Welker D."/>
            <person name="Hughes J."/>
            <person name="Goh Y."/>
            <person name="Benson A."/>
            <person name="Baldwin K."/>
            <person name="Lee J.-H."/>
            <person name="Diaz-Muniz I."/>
            <person name="Dosti B."/>
            <person name="Smeianov V."/>
            <person name="Wechter W."/>
            <person name="Barabote R."/>
            <person name="Lorca G."/>
            <person name="Altermann E."/>
            <person name="Barrangou R."/>
            <person name="Ganesan B."/>
            <person name="Xie Y."/>
            <person name="Rawsthorne H."/>
            <person name="Tamir D."/>
            <person name="Parker C."/>
            <person name="Breidt F."/>
            <person name="Broadbent J.R."/>
            <person name="Hutkins R."/>
            <person name="O'Sullivan D."/>
            <person name="Steele J."/>
            <person name="Unlu G."/>
            <person name="Saier M.H. Jr."/>
            <person name="Klaenhammer T."/>
            <person name="Richardson P."/>
            <person name="Kozyavkin S."/>
            <person name="Weimer B.C."/>
            <person name="Mills D.A."/>
        </authorList>
    </citation>
    <scope>NUCLEOTIDE SEQUENCE [LARGE SCALE GENOMIC DNA]</scope>
    <source>
        <strain>ATCC 25745 / CCUG 21536 / LMG 10740 / 183-1w</strain>
    </source>
</reference>
<name>DAPH_PEDPA</name>
<gene>
    <name evidence="1" type="primary">dapH</name>
    <name type="ordered locus">PEPE_0135</name>
</gene>
<sequence length="236" mass="24824">MSNLDTQSIINTISNSKKQTPVRVFIAGEKLYQLQIPNEIEAFISPTSGTLFGEWKYVKALLESSSQITHYRVENDSRNSAVPLLDKKEVNARIEPGAIIRDQVLIGNNAVIMMGAIINIGAEIGAETMIDMGVVLGGRALVGRHCHIGAGAVLAGVIEPASAQPVQIDDHVLIGANAVVVEGVHVGTGAVVAAGAVVTKDVPAHTVVAGVPAQIIKRVDNTTSQKTALEDGLRNL</sequence>
<dbReference type="EC" id="2.3.1.89" evidence="1"/>
<dbReference type="EMBL" id="CP000422">
    <property type="protein sequence ID" value="ABJ67242.1"/>
    <property type="molecule type" value="Genomic_DNA"/>
</dbReference>
<dbReference type="SMR" id="Q03HT0"/>
<dbReference type="STRING" id="278197.PEPE_0135"/>
<dbReference type="GeneID" id="33062087"/>
<dbReference type="KEGG" id="ppe:PEPE_0135"/>
<dbReference type="eggNOG" id="COG2171">
    <property type="taxonomic scope" value="Bacteria"/>
</dbReference>
<dbReference type="HOGENOM" id="CLU_103751_0_0_9"/>
<dbReference type="OrthoDB" id="9788080at2"/>
<dbReference type="UniPathway" id="UPA00034">
    <property type="reaction ID" value="UER00022"/>
</dbReference>
<dbReference type="Proteomes" id="UP000000773">
    <property type="component" value="Chromosome"/>
</dbReference>
<dbReference type="GO" id="GO:0047200">
    <property type="term" value="F:tetrahydrodipicolinate N-acetyltransferase activity"/>
    <property type="evidence" value="ECO:0007669"/>
    <property type="project" value="UniProtKB-EC"/>
</dbReference>
<dbReference type="GO" id="GO:0019877">
    <property type="term" value="P:diaminopimelate biosynthetic process"/>
    <property type="evidence" value="ECO:0007669"/>
    <property type="project" value="UniProtKB-UniRule"/>
</dbReference>
<dbReference type="GO" id="GO:0009089">
    <property type="term" value="P:lysine biosynthetic process via diaminopimelate"/>
    <property type="evidence" value="ECO:0007669"/>
    <property type="project" value="UniProtKB-UniRule"/>
</dbReference>
<dbReference type="Gene3D" id="2.160.10.10">
    <property type="entry name" value="Hexapeptide repeat proteins"/>
    <property type="match status" value="1"/>
</dbReference>
<dbReference type="Gene3D" id="3.30.70.250">
    <property type="entry name" value="Malonyl-CoA ACP transacylase, ACP-binding"/>
    <property type="match status" value="1"/>
</dbReference>
<dbReference type="HAMAP" id="MF_01691">
    <property type="entry name" value="DapH"/>
    <property type="match status" value="1"/>
</dbReference>
<dbReference type="InterPro" id="IPR019873">
    <property type="entry name" value="DapH"/>
</dbReference>
<dbReference type="InterPro" id="IPR013710">
    <property type="entry name" value="DapH_N"/>
</dbReference>
<dbReference type="InterPro" id="IPR001451">
    <property type="entry name" value="Hexapep"/>
</dbReference>
<dbReference type="InterPro" id="IPR018357">
    <property type="entry name" value="Hexapep_transf_CS"/>
</dbReference>
<dbReference type="InterPro" id="IPR050179">
    <property type="entry name" value="Trans_hexapeptide_repeat"/>
</dbReference>
<dbReference type="InterPro" id="IPR011004">
    <property type="entry name" value="Trimer_LpxA-like_sf"/>
</dbReference>
<dbReference type="NCBIfam" id="TIGR03532">
    <property type="entry name" value="DapD_Ac"/>
    <property type="match status" value="1"/>
</dbReference>
<dbReference type="PANTHER" id="PTHR43300:SF10">
    <property type="entry name" value="2,3,4,5-TETRAHYDROPYRIDINE-2,6-DICARBOXYLATE N-ACETYLTRANSFERASE"/>
    <property type="match status" value="1"/>
</dbReference>
<dbReference type="PANTHER" id="PTHR43300">
    <property type="entry name" value="ACETYLTRANSFERASE"/>
    <property type="match status" value="1"/>
</dbReference>
<dbReference type="Pfam" id="PF08503">
    <property type="entry name" value="DapH_N"/>
    <property type="match status" value="1"/>
</dbReference>
<dbReference type="Pfam" id="PF00132">
    <property type="entry name" value="Hexapep"/>
    <property type="match status" value="1"/>
</dbReference>
<dbReference type="Pfam" id="PF14602">
    <property type="entry name" value="Hexapep_2"/>
    <property type="match status" value="1"/>
</dbReference>
<dbReference type="SUPFAM" id="SSF51161">
    <property type="entry name" value="Trimeric LpxA-like enzymes"/>
    <property type="match status" value="1"/>
</dbReference>
<dbReference type="PROSITE" id="PS00101">
    <property type="entry name" value="HEXAPEP_TRANSFERASES"/>
    <property type="match status" value="1"/>
</dbReference>
<evidence type="ECO:0000255" key="1">
    <source>
        <dbReference type="HAMAP-Rule" id="MF_01691"/>
    </source>
</evidence>
<organism>
    <name type="scientific">Pediococcus pentosaceus (strain ATCC 25745 / CCUG 21536 / LMG 10740 / 183-1w)</name>
    <dbReference type="NCBI Taxonomy" id="278197"/>
    <lineage>
        <taxon>Bacteria</taxon>
        <taxon>Bacillati</taxon>
        <taxon>Bacillota</taxon>
        <taxon>Bacilli</taxon>
        <taxon>Lactobacillales</taxon>
        <taxon>Lactobacillaceae</taxon>
        <taxon>Pediococcus</taxon>
    </lineage>
</organism>
<comment type="function">
    <text evidence="1">Catalyzes the transfer of an acetyl group from acetyl-CoA to tetrahydrodipicolinate.</text>
</comment>
<comment type="catalytic activity">
    <reaction evidence="1">
        <text>(S)-2,3,4,5-tetrahydrodipicolinate + acetyl-CoA + H2O = L-2-acetamido-6-oxoheptanedioate + CoA</text>
        <dbReference type="Rhea" id="RHEA:13085"/>
        <dbReference type="ChEBI" id="CHEBI:15377"/>
        <dbReference type="ChEBI" id="CHEBI:16845"/>
        <dbReference type="ChEBI" id="CHEBI:57287"/>
        <dbReference type="ChEBI" id="CHEBI:57288"/>
        <dbReference type="ChEBI" id="CHEBI:58117"/>
        <dbReference type="EC" id="2.3.1.89"/>
    </reaction>
</comment>
<comment type="pathway">
    <text evidence="1">Amino-acid biosynthesis; L-lysine biosynthesis via DAP pathway; LL-2,6-diaminopimelate from (S)-tetrahydrodipicolinate (acetylase route): step 1/3.</text>
</comment>
<comment type="similarity">
    <text evidence="1">Belongs to the transferase hexapeptide repeat family. DapH subfamily.</text>
</comment>
<proteinExistence type="inferred from homology"/>
<protein>
    <recommendedName>
        <fullName evidence="1">2,3,4,5-tetrahydropyridine-2,6-dicarboxylate N-acetyltransferase</fullName>
        <ecNumber evidence="1">2.3.1.89</ecNumber>
    </recommendedName>
    <alternativeName>
        <fullName evidence="1">Tetrahydrodipicolinate N-acetyltransferase</fullName>
        <shortName evidence="1">THP acetyltransferase</shortName>
        <shortName evidence="1">Tetrahydropicolinate acetylase</shortName>
    </alternativeName>
</protein>
<keyword id="KW-0012">Acyltransferase</keyword>
<keyword id="KW-0028">Amino-acid biosynthesis</keyword>
<keyword id="KW-0220">Diaminopimelate biosynthesis</keyword>
<keyword id="KW-0457">Lysine biosynthesis</keyword>
<keyword id="KW-0677">Repeat</keyword>
<keyword id="KW-0808">Transferase</keyword>
<accession>Q03HT0</accession>